<gene>
    <name type="primary">GH3.10</name>
    <name type="ordered locus">Os07g0576100</name>
    <name type="ordered locus">LOC_Os07g38860</name>
    <name type="ORF">OJ1065_B06.4</name>
</gene>
<sequence>MAAKGISTIGAASRSLSSSLMAAAKEPDVENLRLIEELTSNVDAVQERVLAEILGRNADAEYLDKCGLDASDTDRATFRAKVPVASYDDLKPYVKRIANGDRSPILSTHPIIEFFTSSGTSAGERKLMPIVTDEMARREVLSSLATSVLNVYVPGLHTGKGLYFLFARSETKTPGGLTAQPALTSVYKSEHFKRAYAYTSPMAAILCEDASQSMYAQMLCGLCQRHDVLRVGAVFAAALVRAIRFLQLNWAQLAADIETGELNPRVTDPSDRECSRGDWTGIVTRLWPKTKCLNVVVTGVMAQYIPTLQYYSGGLPIVSGMYASSECFFGLNLRPLCGPSEVSYTIMPNTAYFEFLPVGEAVDASNLVELARVEDGREYEVVVTTYAGLNRYRVGDVLCVTGFHNAAPQFRFVRRQSVLLSIEADKTDEAELQRAVERASSALLRPRGASIVEYTSRACTERVPGHFSPALPHWTLAP</sequence>
<dbReference type="EC" id="6.3.2.-"/>
<dbReference type="EMBL" id="AP003804">
    <property type="protein sequence ID" value="BAC83060.1"/>
    <property type="molecule type" value="Genomic_DNA"/>
</dbReference>
<dbReference type="EMBL" id="AP014963">
    <property type="status" value="NOT_ANNOTATED_CDS"/>
    <property type="molecule type" value="Genomic_DNA"/>
</dbReference>
<dbReference type="SMR" id="Q6ZLA7"/>
<dbReference type="FunCoup" id="Q6ZLA7">
    <property type="interactions" value="126"/>
</dbReference>
<dbReference type="STRING" id="39947.Q6ZLA7"/>
<dbReference type="PaxDb" id="39947-Q6ZLA7"/>
<dbReference type="eggNOG" id="ENOG502QR80">
    <property type="taxonomic scope" value="Eukaryota"/>
</dbReference>
<dbReference type="InParanoid" id="Q6ZLA7"/>
<dbReference type="Proteomes" id="UP000000763">
    <property type="component" value="Chromosome 7"/>
</dbReference>
<dbReference type="Proteomes" id="UP000059680">
    <property type="component" value="Chromosome 7"/>
</dbReference>
<dbReference type="GO" id="GO:0005737">
    <property type="term" value="C:cytoplasm"/>
    <property type="evidence" value="ECO:0000318"/>
    <property type="project" value="GO_Central"/>
</dbReference>
<dbReference type="GO" id="GO:0016881">
    <property type="term" value="F:acid-amino acid ligase activity"/>
    <property type="evidence" value="ECO:0000318"/>
    <property type="project" value="GO_Central"/>
</dbReference>
<dbReference type="GO" id="GO:0009733">
    <property type="term" value="P:response to auxin"/>
    <property type="evidence" value="ECO:0000305"/>
    <property type="project" value="Gramene"/>
</dbReference>
<dbReference type="GO" id="GO:0009416">
    <property type="term" value="P:response to light stimulus"/>
    <property type="evidence" value="ECO:0000305"/>
    <property type="project" value="Gramene"/>
</dbReference>
<dbReference type="InterPro" id="IPR004993">
    <property type="entry name" value="GH3"/>
</dbReference>
<dbReference type="InterPro" id="IPR055377">
    <property type="entry name" value="GH3_M"/>
</dbReference>
<dbReference type="PANTHER" id="PTHR31901">
    <property type="entry name" value="GH3 DOMAIN-CONTAINING PROTEIN"/>
    <property type="match status" value="1"/>
</dbReference>
<dbReference type="PANTHER" id="PTHR31901:SF96">
    <property type="entry name" value="INDOLE-3-ACETIC ACID-AMIDO SYNTHETASE GH3.1-RELATED"/>
    <property type="match status" value="1"/>
</dbReference>
<dbReference type="Pfam" id="PF03321">
    <property type="entry name" value="GH3"/>
    <property type="match status" value="1"/>
</dbReference>
<dbReference type="Pfam" id="PF23571">
    <property type="entry name" value="GH3_M"/>
    <property type="match status" value="1"/>
</dbReference>
<proteinExistence type="inferred from homology"/>
<keyword id="KW-0436">Ligase</keyword>
<keyword id="KW-1185">Reference proteome</keyword>
<protein>
    <recommendedName>
        <fullName>Putative indole-3-acetic acid-amido synthetase GH3.10</fullName>
        <ecNumber>6.3.2.-</ecNumber>
    </recommendedName>
    <alternativeName>
        <fullName>Auxin-responsive GH3-like protein 10</fullName>
        <shortName>OsGH3-10</shortName>
    </alternativeName>
</protein>
<comment type="function">
    <text evidence="1">May catalyze the synthesis of indole-3-acetic acid (IAA)-amino acid conjugates, providing a mechanism for the plant to cope with the presence of excess auxin.</text>
</comment>
<comment type="similarity">
    <text evidence="2">Belongs to the IAA-amido conjugating enzyme family.</text>
</comment>
<evidence type="ECO:0000250" key="1"/>
<evidence type="ECO:0000305" key="2"/>
<reference key="1">
    <citation type="journal article" date="2005" name="Nature">
        <title>The map-based sequence of the rice genome.</title>
        <authorList>
            <consortium name="International rice genome sequencing project (IRGSP)"/>
        </authorList>
    </citation>
    <scope>NUCLEOTIDE SEQUENCE [LARGE SCALE GENOMIC DNA]</scope>
    <source>
        <strain>cv. Nipponbare</strain>
    </source>
</reference>
<reference key="2">
    <citation type="journal article" date="2013" name="Rice">
        <title>Improvement of the Oryza sativa Nipponbare reference genome using next generation sequence and optical map data.</title>
        <authorList>
            <person name="Kawahara Y."/>
            <person name="de la Bastide M."/>
            <person name="Hamilton J.P."/>
            <person name="Kanamori H."/>
            <person name="McCombie W.R."/>
            <person name="Ouyang S."/>
            <person name="Schwartz D.C."/>
            <person name="Tanaka T."/>
            <person name="Wu J."/>
            <person name="Zhou S."/>
            <person name="Childs K.L."/>
            <person name="Davidson R.M."/>
            <person name="Lin H."/>
            <person name="Quesada-Ocampo L."/>
            <person name="Vaillancourt B."/>
            <person name="Sakai H."/>
            <person name="Lee S.S."/>
            <person name="Kim J."/>
            <person name="Numa H."/>
            <person name="Itoh T."/>
            <person name="Buell C.R."/>
            <person name="Matsumoto T."/>
        </authorList>
    </citation>
    <scope>GENOME REANNOTATION</scope>
    <source>
        <strain>cv. Nipponbare</strain>
    </source>
</reference>
<reference key="3">
    <citation type="journal article" date="2006" name="Funct. Integr. Genomics">
        <title>The auxin-responsive GH3 gene family in rice (Oryza sativa).</title>
        <authorList>
            <person name="Jain M."/>
            <person name="Kaur N."/>
            <person name="Tyagi A.K."/>
            <person name="Khurana J.P."/>
        </authorList>
    </citation>
    <scope>IDENTIFICATION</scope>
</reference>
<accession>Q6ZLA7</accession>
<name>GH310_ORYSJ</name>
<feature type="chain" id="PRO_0000203587" description="Putative indole-3-acetic acid-amido synthetase GH3.10">
    <location>
        <begin position="1"/>
        <end position="478"/>
    </location>
</feature>
<organism>
    <name type="scientific">Oryza sativa subsp. japonica</name>
    <name type="common">Rice</name>
    <dbReference type="NCBI Taxonomy" id="39947"/>
    <lineage>
        <taxon>Eukaryota</taxon>
        <taxon>Viridiplantae</taxon>
        <taxon>Streptophyta</taxon>
        <taxon>Embryophyta</taxon>
        <taxon>Tracheophyta</taxon>
        <taxon>Spermatophyta</taxon>
        <taxon>Magnoliopsida</taxon>
        <taxon>Liliopsida</taxon>
        <taxon>Poales</taxon>
        <taxon>Poaceae</taxon>
        <taxon>BOP clade</taxon>
        <taxon>Oryzoideae</taxon>
        <taxon>Oryzeae</taxon>
        <taxon>Oryzinae</taxon>
        <taxon>Oryza</taxon>
        <taxon>Oryza sativa</taxon>
    </lineage>
</organism>